<accession>P82159</accession>
<proteinExistence type="evidence at protein level"/>
<comment type="subunit">
    <text>Myosin is a hexamer of 2 heavy chains and 4 light chains.</text>
</comment>
<comment type="miscellaneous">
    <text>In fish, myosin MLC1 and MLC3 appear to be produced by two different genes unlike in birds and mammals, where they are produced from a single gene by alternative splicing.</text>
</comment>
<evidence type="ECO:0000255" key="1">
    <source>
        <dbReference type="PROSITE-ProRule" id="PRU00448"/>
    </source>
</evidence>
<evidence type="ECO:0000256" key="2">
    <source>
        <dbReference type="SAM" id="MobiDB-lite"/>
    </source>
</evidence>
<sequence length="186" mass="20067">MPKAPAKKAEPAPAPAPAPEPAPAPAAPAVDLSAVKVEFSADQIEDYREAFGLFDRVGDNKVAYNQIADIMRALGQNPTNKEVSKLLGNPSADDMTNKRVEFEAFLPMLQTIINSPNKAGFEDYVEGLRVFDKEGNGTVMGAELRIVLSTLGEKMTEAEIDALMAGQEDENGVVNYEAFVKHIMSV</sequence>
<organism>
    <name type="scientific">Chelon ramada</name>
    <name type="common">Thin-lipped grey mullet</name>
    <name type="synonym">Mugil ramada</name>
    <dbReference type="NCBI Taxonomy" id="30804"/>
    <lineage>
        <taxon>Eukaryota</taxon>
        <taxon>Metazoa</taxon>
        <taxon>Chordata</taxon>
        <taxon>Craniata</taxon>
        <taxon>Vertebrata</taxon>
        <taxon>Euteleostomi</taxon>
        <taxon>Actinopterygii</taxon>
        <taxon>Neopterygii</taxon>
        <taxon>Teleostei</taxon>
        <taxon>Neoteleostei</taxon>
        <taxon>Acanthomorphata</taxon>
        <taxon>Ovalentaria</taxon>
        <taxon>Mugilomorphae</taxon>
        <taxon>Mugilidae</taxon>
        <taxon>Chelon</taxon>
    </lineage>
</organism>
<dbReference type="SMR" id="P82159"/>
<dbReference type="GO" id="GO:0043292">
    <property type="term" value="C:contractile muscle fiber"/>
    <property type="evidence" value="ECO:0007669"/>
    <property type="project" value="TreeGrafter"/>
</dbReference>
<dbReference type="GO" id="GO:0016460">
    <property type="term" value="C:myosin II complex"/>
    <property type="evidence" value="ECO:0007669"/>
    <property type="project" value="TreeGrafter"/>
</dbReference>
<dbReference type="GO" id="GO:0005509">
    <property type="term" value="F:calcium ion binding"/>
    <property type="evidence" value="ECO:0007669"/>
    <property type="project" value="InterPro"/>
</dbReference>
<dbReference type="CDD" id="cd00051">
    <property type="entry name" value="EFh"/>
    <property type="match status" value="1"/>
</dbReference>
<dbReference type="FunFam" id="1.10.238.10:FF:000019">
    <property type="entry name" value="Myosin light chain 1 skeletal"/>
    <property type="match status" value="1"/>
</dbReference>
<dbReference type="Gene3D" id="1.10.238.10">
    <property type="entry name" value="EF-hand"/>
    <property type="match status" value="2"/>
</dbReference>
<dbReference type="InterPro" id="IPR050230">
    <property type="entry name" value="CALM/Myosin/TropC-like"/>
</dbReference>
<dbReference type="InterPro" id="IPR011992">
    <property type="entry name" value="EF-hand-dom_pair"/>
</dbReference>
<dbReference type="InterPro" id="IPR002048">
    <property type="entry name" value="EF_hand_dom"/>
</dbReference>
<dbReference type="PANTHER" id="PTHR23048">
    <property type="entry name" value="MYOSIN LIGHT CHAIN 1, 3"/>
    <property type="match status" value="1"/>
</dbReference>
<dbReference type="PANTHER" id="PTHR23048:SF10">
    <property type="entry name" value="MYOSIN, LIGHT CHAIN 1, ALKALI_ SKELETAL, FAST"/>
    <property type="match status" value="1"/>
</dbReference>
<dbReference type="SUPFAM" id="SSF47473">
    <property type="entry name" value="EF-hand"/>
    <property type="match status" value="1"/>
</dbReference>
<dbReference type="PROSITE" id="PS50222">
    <property type="entry name" value="EF_HAND_2"/>
    <property type="match status" value="2"/>
</dbReference>
<feature type="chain" id="PRO_0000198706" description="Myosin light chain 1, skeletal muscle isoform">
    <location>
        <begin position="1"/>
        <end position="186"/>
    </location>
</feature>
<feature type="domain" description="EF-hand 1" evidence="1">
    <location>
        <begin position="42"/>
        <end position="77"/>
    </location>
</feature>
<feature type="domain" description="EF-hand 2" evidence="1">
    <location>
        <begin position="119"/>
        <end position="154"/>
    </location>
</feature>
<feature type="region of interest" description="Disordered" evidence="2">
    <location>
        <begin position="1"/>
        <end position="26"/>
    </location>
</feature>
<feature type="compositionally biased region" description="Pro residues" evidence="2">
    <location>
        <begin position="12"/>
        <end position="26"/>
    </location>
</feature>
<feature type="modified residue" description="Blocked amino end (Met)">
    <location>
        <position position="1"/>
    </location>
</feature>
<protein>
    <recommendedName>
        <fullName>Myosin light chain 1, skeletal muscle isoform</fullName>
    </recommendedName>
    <alternativeName>
        <fullName>LC-1</fullName>
        <shortName>LC1</shortName>
    </alternativeName>
    <alternativeName>
        <fullName>Myosin light chain alkali 1</fullName>
        <shortName>Myosin light chain A1</shortName>
    </alternativeName>
</protein>
<keyword id="KW-0903">Direct protein sequencing</keyword>
<keyword id="KW-0505">Motor protein</keyword>
<keyword id="KW-0514">Muscle protein</keyword>
<keyword id="KW-0518">Myosin</keyword>
<keyword id="KW-0677">Repeat</keyword>
<name>MLE1_CHERA</name>
<reference key="1">
    <citation type="journal article" date="1991" name="J. Muscle Res. Cell Motil.">
        <title>Fish myosin alkali light chains originate from two different genes.</title>
        <authorList>
            <person name="dalla Libera L."/>
            <person name="Carpene E."/>
            <person name="Theibert J."/>
            <person name="Collins J.H."/>
        </authorList>
    </citation>
    <scope>PROTEIN SEQUENCE</scope>
    <source>
        <tissue>Fast-twitch skeletal muscle</tissue>
    </source>
</reference>